<proteinExistence type="predicted"/>
<feature type="chain" id="PRO_0000202285" description="Uncharacterized protein TP_0599">
    <location>
        <begin position="1"/>
        <end position="218"/>
    </location>
</feature>
<reference key="1">
    <citation type="journal article" date="1998" name="Science">
        <title>Complete genome sequence of Treponema pallidum, the syphilis spirochete.</title>
        <authorList>
            <person name="Fraser C.M."/>
            <person name="Norris S.J."/>
            <person name="Weinstock G.M."/>
            <person name="White O."/>
            <person name="Sutton G.G."/>
            <person name="Dodson R.J."/>
            <person name="Gwinn M.L."/>
            <person name="Hickey E.K."/>
            <person name="Clayton R.A."/>
            <person name="Ketchum K.A."/>
            <person name="Sodergren E."/>
            <person name="Hardham J.M."/>
            <person name="McLeod M.P."/>
            <person name="Salzberg S.L."/>
            <person name="Peterson J.D."/>
            <person name="Khalak H.G."/>
            <person name="Richardson D.L."/>
            <person name="Howell J.K."/>
            <person name="Chidambaram M."/>
            <person name="Utterback T.R."/>
            <person name="McDonald L.A."/>
            <person name="Artiach P."/>
            <person name="Bowman C."/>
            <person name="Cotton M.D."/>
            <person name="Fujii C."/>
            <person name="Garland S.A."/>
            <person name="Hatch B."/>
            <person name="Horst K."/>
            <person name="Roberts K.M."/>
            <person name="Sandusky M."/>
            <person name="Weidman J.F."/>
            <person name="Smith H.O."/>
            <person name="Venter J.C."/>
        </authorList>
    </citation>
    <scope>NUCLEOTIDE SEQUENCE [LARGE SCALE GENOMIC DNA]</scope>
    <source>
        <strain>Nichols</strain>
    </source>
</reference>
<organism>
    <name type="scientific">Treponema pallidum (strain Nichols)</name>
    <dbReference type="NCBI Taxonomy" id="243276"/>
    <lineage>
        <taxon>Bacteria</taxon>
        <taxon>Pseudomonadati</taxon>
        <taxon>Spirochaetota</taxon>
        <taxon>Spirochaetia</taxon>
        <taxon>Spirochaetales</taxon>
        <taxon>Treponemataceae</taxon>
        <taxon>Treponema</taxon>
    </lineage>
</organism>
<keyword id="KW-1185">Reference proteome</keyword>
<sequence length="218" mass="24978">MMQLRCACERVFDIEHETVISLDEHPEFVARIQQGDFLSYQCPACGARIRAEIKTEFVWHAKNVHLLLVPERERLRCLAFCAGMHMSDGDSADFCEPFVLREHQTPVIGYAELADRVAILAWDLNPEIVEAVKFFVLEGAPHLGDKRVSCFFERCVGDTGSRVMELHVYGIREQQTAIMPVPMNVYERVERERGKQAELFEALYVGAYLSYKNVFTDA</sequence>
<protein>
    <recommendedName>
        <fullName>Uncharacterized protein TP_0599</fullName>
    </recommendedName>
</protein>
<accession>O83608</accession>
<dbReference type="EMBL" id="AE000520">
    <property type="protein sequence ID" value="AAC65582.1"/>
    <property type="molecule type" value="Genomic_DNA"/>
</dbReference>
<dbReference type="PIR" id="A71304">
    <property type="entry name" value="A71304"/>
</dbReference>
<dbReference type="STRING" id="243276.TP_0599"/>
<dbReference type="EnsemblBacteria" id="AAC65582">
    <property type="protein sequence ID" value="AAC65582"/>
    <property type="gene ID" value="TP_0599"/>
</dbReference>
<dbReference type="KEGG" id="tpa:TP_0599"/>
<dbReference type="KEGG" id="tpw:TPANIC_0599"/>
<dbReference type="eggNOG" id="ENOG5031C85">
    <property type="taxonomic scope" value="Bacteria"/>
</dbReference>
<dbReference type="HOGENOM" id="CLU_1282737_0_0_12"/>
<dbReference type="Proteomes" id="UP000000811">
    <property type="component" value="Chromosome"/>
</dbReference>
<dbReference type="InterPro" id="IPR025682">
    <property type="entry name" value="CpXC_dom"/>
</dbReference>
<dbReference type="Pfam" id="PF14353">
    <property type="entry name" value="CpXC"/>
    <property type="match status" value="1"/>
</dbReference>
<name>Y599_TREPA</name>
<gene>
    <name type="ordered locus">TP_0599</name>
</gene>